<sequence>MARLGVNIDHVATLRQARGGTEPDPVAAAAIAEFAGADGITIHLREDRRHIQDRDLKILRQTVQTRLNLEMAATDEMVAIALAVKPEACTLVPEKRAELTTEGGLDVRIHQEALKVAIEKLQAGGIIVSLFIDPDPDQIKVANKIGADYIEIHTGSFAEAKSWKEEELELIKIENAVKLARKLDLGVNAGHGLSYSNVKKVAAIGGIEEFNIGHSIMSRAILVGLDRAVRDMSELVRYA</sequence>
<evidence type="ECO:0000255" key="1">
    <source>
        <dbReference type="HAMAP-Rule" id="MF_00279"/>
    </source>
</evidence>
<comment type="function">
    <text evidence="1">Catalyzes the complicated ring closure reaction between the two acyclic compounds 1-deoxy-D-xylulose-5-phosphate (DXP) and 3-amino-2-oxopropyl phosphate (1-amino-acetone-3-phosphate or AAP) to form pyridoxine 5'-phosphate (PNP) and inorganic phosphate.</text>
</comment>
<comment type="catalytic activity">
    <reaction evidence="1">
        <text>3-amino-2-oxopropyl phosphate + 1-deoxy-D-xylulose 5-phosphate = pyridoxine 5'-phosphate + phosphate + 2 H2O + H(+)</text>
        <dbReference type="Rhea" id="RHEA:15265"/>
        <dbReference type="ChEBI" id="CHEBI:15377"/>
        <dbReference type="ChEBI" id="CHEBI:15378"/>
        <dbReference type="ChEBI" id="CHEBI:43474"/>
        <dbReference type="ChEBI" id="CHEBI:57279"/>
        <dbReference type="ChEBI" id="CHEBI:57792"/>
        <dbReference type="ChEBI" id="CHEBI:58589"/>
        <dbReference type="EC" id="2.6.99.2"/>
    </reaction>
</comment>
<comment type="pathway">
    <text evidence="1">Cofactor biosynthesis; pyridoxine 5'-phosphate biosynthesis; pyridoxine 5'-phosphate from D-erythrose 4-phosphate: step 5/5.</text>
</comment>
<comment type="subunit">
    <text evidence="1">Homooctamer; tetramer of dimers.</text>
</comment>
<comment type="subcellular location">
    <subcellularLocation>
        <location evidence="1">Cytoplasm</location>
    </subcellularLocation>
</comment>
<comment type="similarity">
    <text evidence="1">Belongs to the PNP synthase family.</text>
</comment>
<proteinExistence type="inferred from homology"/>
<dbReference type="EC" id="2.6.99.2" evidence="1"/>
<dbReference type="EMBL" id="CP001124">
    <property type="protein sequence ID" value="ACH39642.1"/>
    <property type="molecule type" value="Genomic_DNA"/>
</dbReference>
<dbReference type="RefSeq" id="WP_012531064.1">
    <property type="nucleotide sequence ID" value="NC_011146.1"/>
</dbReference>
<dbReference type="SMR" id="B5EHA6"/>
<dbReference type="STRING" id="404380.Gbem_2634"/>
<dbReference type="KEGG" id="gbm:Gbem_2634"/>
<dbReference type="eggNOG" id="COG0854">
    <property type="taxonomic scope" value="Bacteria"/>
</dbReference>
<dbReference type="HOGENOM" id="CLU_074563_0_0_7"/>
<dbReference type="OrthoDB" id="9806590at2"/>
<dbReference type="UniPathway" id="UPA00244">
    <property type="reaction ID" value="UER00313"/>
</dbReference>
<dbReference type="Proteomes" id="UP000008825">
    <property type="component" value="Chromosome"/>
</dbReference>
<dbReference type="GO" id="GO:0005829">
    <property type="term" value="C:cytosol"/>
    <property type="evidence" value="ECO:0007669"/>
    <property type="project" value="TreeGrafter"/>
</dbReference>
<dbReference type="GO" id="GO:0033856">
    <property type="term" value="F:pyridoxine 5'-phosphate synthase activity"/>
    <property type="evidence" value="ECO:0007669"/>
    <property type="project" value="UniProtKB-EC"/>
</dbReference>
<dbReference type="GO" id="GO:0008615">
    <property type="term" value="P:pyridoxine biosynthetic process"/>
    <property type="evidence" value="ECO:0007669"/>
    <property type="project" value="UniProtKB-UniRule"/>
</dbReference>
<dbReference type="CDD" id="cd00003">
    <property type="entry name" value="PNPsynthase"/>
    <property type="match status" value="1"/>
</dbReference>
<dbReference type="Gene3D" id="3.20.20.70">
    <property type="entry name" value="Aldolase class I"/>
    <property type="match status" value="1"/>
</dbReference>
<dbReference type="HAMAP" id="MF_00279">
    <property type="entry name" value="PdxJ"/>
    <property type="match status" value="1"/>
</dbReference>
<dbReference type="InterPro" id="IPR013785">
    <property type="entry name" value="Aldolase_TIM"/>
</dbReference>
<dbReference type="InterPro" id="IPR004569">
    <property type="entry name" value="PyrdxlP_synth_PdxJ"/>
</dbReference>
<dbReference type="InterPro" id="IPR036130">
    <property type="entry name" value="Pyridoxine-5'_phos_synth"/>
</dbReference>
<dbReference type="NCBIfam" id="TIGR00559">
    <property type="entry name" value="pdxJ"/>
    <property type="match status" value="1"/>
</dbReference>
<dbReference type="NCBIfam" id="NF003623">
    <property type="entry name" value="PRK05265.1-1"/>
    <property type="match status" value="1"/>
</dbReference>
<dbReference type="NCBIfam" id="NF003625">
    <property type="entry name" value="PRK05265.1-3"/>
    <property type="match status" value="1"/>
</dbReference>
<dbReference type="NCBIfam" id="NF003627">
    <property type="entry name" value="PRK05265.1-5"/>
    <property type="match status" value="1"/>
</dbReference>
<dbReference type="PANTHER" id="PTHR30456">
    <property type="entry name" value="PYRIDOXINE 5'-PHOSPHATE SYNTHASE"/>
    <property type="match status" value="1"/>
</dbReference>
<dbReference type="PANTHER" id="PTHR30456:SF0">
    <property type="entry name" value="PYRIDOXINE 5'-PHOSPHATE SYNTHASE"/>
    <property type="match status" value="1"/>
</dbReference>
<dbReference type="Pfam" id="PF03740">
    <property type="entry name" value="PdxJ"/>
    <property type="match status" value="1"/>
</dbReference>
<dbReference type="SUPFAM" id="SSF63892">
    <property type="entry name" value="Pyridoxine 5'-phosphate synthase"/>
    <property type="match status" value="1"/>
</dbReference>
<name>PDXJ_CITBB</name>
<keyword id="KW-0963">Cytoplasm</keyword>
<keyword id="KW-0664">Pyridoxine biosynthesis</keyword>
<keyword id="KW-1185">Reference proteome</keyword>
<keyword id="KW-0808">Transferase</keyword>
<protein>
    <recommendedName>
        <fullName evidence="1">Pyridoxine 5'-phosphate synthase</fullName>
        <shortName evidence="1">PNP synthase</shortName>
        <ecNumber evidence="1">2.6.99.2</ecNumber>
    </recommendedName>
</protein>
<gene>
    <name evidence="1" type="primary">pdxJ</name>
    <name type="ordered locus">Gbem_2634</name>
</gene>
<organism>
    <name type="scientific">Citrifermentans bemidjiense (strain ATCC BAA-1014 / DSM 16622 / JCM 12645 / Bem)</name>
    <name type="common">Geobacter bemidjiensis</name>
    <dbReference type="NCBI Taxonomy" id="404380"/>
    <lineage>
        <taxon>Bacteria</taxon>
        <taxon>Pseudomonadati</taxon>
        <taxon>Thermodesulfobacteriota</taxon>
        <taxon>Desulfuromonadia</taxon>
        <taxon>Geobacterales</taxon>
        <taxon>Geobacteraceae</taxon>
        <taxon>Citrifermentans</taxon>
    </lineage>
</organism>
<reference key="1">
    <citation type="submission" date="2008-07" db="EMBL/GenBank/DDBJ databases">
        <title>Complete sequence of Geobacter bemidjiensis BEM.</title>
        <authorList>
            <consortium name="US DOE Joint Genome Institute"/>
            <person name="Lucas S."/>
            <person name="Copeland A."/>
            <person name="Lapidus A."/>
            <person name="Glavina del Rio T."/>
            <person name="Dalin E."/>
            <person name="Tice H."/>
            <person name="Bruce D."/>
            <person name="Goodwin L."/>
            <person name="Pitluck S."/>
            <person name="Kiss H."/>
            <person name="Brettin T."/>
            <person name="Detter J.C."/>
            <person name="Han C."/>
            <person name="Kuske C.R."/>
            <person name="Schmutz J."/>
            <person name="Larimer F."/>
            <person name="Land M."/>
            <person name="Hauser L."/>
            <person name="Kyrpides N."/>
            <person name="Lykidis A."/>
            <person name="Lovley D."/>
            <person name="Richardson P."/>
        </authorList>
    </citation>
    <scope>NUCLEOTIDE SEQUENCE [LARGE SCALE GENOMIC DNA]</scope>
    <source>
        <strain>ATCC BAA-1014 / DSM 16622 / JCM 12645 / Bem</strain>
    </source>
</reference>
<feature type="chain" id="PRO_1000114809" description="Pyridoxine 5'-phosphate synthase">
    <location>
        <begin position="1"/>
        <end position="239"/>
    </location>
</feature>
<feature type="active site" description="Proton acceptor" evidence="1">
    <location>
        <position position="43"/>
    </location>
</feature>
<feature type="active site" description="Proton acceptor" evidence="1">
    <location>
        <position position="70"/>
    </location>
</feature>
<feature type="active site" description="Proton donor" evidence="1">
    <location>
        <position position="191"/>
    </location>
</feature>
<feature type="binding site" evidence="1">
    <location>
        <position position="7"/>
    </location>
    <ligand>
        <name>3-amino-2-oxopropyl phosphate</name>
        <dbReference type="ChEBI" id="CHEBI:57279"/>
    </ligand>
</feature>
<feature type="binding site" evidence="1">
    <location>
        <begin position="9"/>
        <end position="10"/>
    </location>
    <ligand>
        <name>1-deoxy-D-xylulose 5-phosphate</name>
        <dbReference type="ChEBI" id="CHEBI:57792"/>
    </ligand>
</feature>
<feature type="binding site" evidence="1">
    <location>
        <position position="18"/>
    </location>
    <ligand>
        <name>3-amino-2-oxopropyl phosphate</name>
        <dbReference type="ChEBI" id="CHEBI:57279"/>
    </ligand>
</feature>
<feature type="binding site" evidence="1">
    <location>
        <position position="45"/>
    </location>
    <ligand>
        <name>1-deoxy-D-xylulose 5-phosphate</name>
        <dbReference type="ChEBI" id="CHEBI:57792"/>
    </ligand>
</feature>
<feature type="binding site" evidence="1">
    <location>
        <position position="50"/>
    </location>
    <ligand>
        <name>1-deoxy-D-xylulose 5-phosphate</name>
        <dbReference type="ChEBI" id="CHEBI:57792"/>
    </ligand>
</feature>
<feature type="binding site" evidence="1">
    <location>
        <position position="100"/>
    </location>
    <ligand>
        <name>1-deoxy-D-xylulose 5-phosphate</name>
        <dbReference type="ChEBI" id="CHEBI:57792"/>
    </ligand>
</feature>
<feature type="binding site" evidence="1">
    <location>
        <position position="192"/>
    </location>
    <ligand>
        <name>3-amino-2-oxopropyl phosphate</name>
        <dbReference type="ChEBI" id="CHEBI:57279"/>
    </ligand>
</feature>
<feature type="binding site" evidence="1">
    <location>
        <begin position="213"/>
        <end position="214"/>
    </location>
    <ligand>
        <name>3-amino-2-oxopropyl phosphate</name>
        <dbReference type="ChEBI" id="CHEBI:57279"/>
    </ligand>
</feature>
<feature type="site" description="Transition state stabilizer" evidence="1">
    <location>
        <position position="151"/>
    </location>
</feature>
<accession>B5EHA6</accession>